<keyword id="KW-0249">Electron transport</keyword>
<keyword id="KW-0472">Membrane</keyword>
<keyword id="KW-0496">Mitochondrion</keyword>
<keyword id="KW-0520">NAD</keyword>
<keyword id="KW-1185">Reference proteome</keyword>
<keyword id="KW-0679">Respiratory chain</keyword>
<keyword id="KW-1278">Translocase</keyword>
<keyword id="KW-0812">Transmembrane</keyword>
<keyword id="KW-1133">Transmembrane helix</keyword>
<keyword id="KW-0813">Transport</keyword>
<keyword id="KW-0830">Ubiquinone</keyword>
<geneLocation type="mitochondrion"/>
<accession>Q4JQI0</accession>
<name>NU3M_TETNG</name>
<gene>
    <name type="primary">MT-ND3</name>
    <name type="synonym">MTND3</name>
    <name type="synonym">NADH3</name>
    <name type="synonym">ND3</name>
</gene>
<sequence>MNLLLTILFITTILSLILAIVSFWLPLMTPDYQKLSPYECGFDPLGSARLPFSIRFFLVAILFLLFDLEIALLLPLPWGDQLPSPMFTLLWASALLIMLTLGLIYEWLQGGLEWAEK</sequence>
<proteinExistence type="inferred from homology"/>
<reference key="1">
    <citation type="journal article" date="2006" name="DNA Seq.">
        <title>The complete nucleotide sequence of the mitochondrial genome of Tetraodon nigroviridis.</title>
        <authorList>
            <person name="Yue G.H."/>
            <person name="Lo L.C."/>
            <person name="Zhu Z.Y."/>
            <person name="Lin G."/>
            <person name="Feng F."/>
        </authorList>
    </citation>
    <scope>NUCLEOTIDE SEQUENCE [LARGE SCALE GENOMIC DNA]</scope>
</reference>
<comment type="function">
    <text evidence="1">Core subunit of the mitochondrial membrane respiratory chain NADH dehydrogenase (Complex I) that is believed to belong to the minimal assembly required for catalysis. Complex I functions in the transfer of electrons from NADH to the respiratory chain. The immediate electron acceptor for the enzyme is believed to be ubiquinone (By similarity).</text>
</comment>
<comment type="catalytic activity">
    <reaction>
        <text>a ubiquinone + NADH + 5 H(+)(in) = a ubiquinol + NAD(+) + 4 H(+)(out)</text>
        <dbReference type="Rhea" id="RHEA:29091"/>
        <dbReference type="Rhea" id="RHEA-COMP:9565"/>
        <dbReference type="Rhea" id="RHEA-COMP:9566"/>
        <dbReference type="ChEBI" id="CHEBI:15378"/>
        <dbReference type="ChEBI" id="CHEBI:16389"/>
        <dbReference type="ChEBI" id="CHEBI:17976"/>
        <dbReference type="ChEBI" id="CHEBI:57540"/>
        <dbReference type="ChEBI" id="CHEBI:57945"/>
        <dbReference type="EC" id="7.1.1.2"/>
    </reaction>
</comment>
<comment type="subcellular location">
    <subcellularLocation>
        <location evidence="1">Mitochondrion membrane</location>
        <topology evidence="1">Multi-pass membrane protein</topology>
    </subcellularLocation>
</comment>
<comment type="similarity">
    <text evidence="3">Belongs to the complex I subunit 3 family.</text>
</comment>
<dbReference type="EC" id="7.1.1.2"/>
<dbReference type="EMBL" id="DQ019313">
    <property type="protein sequence ID" value="AAY26166.1"/>
    <property type="molecule type" value="Genomic_DNA"/>
</dbReference>
<dbReference type="SMR" id="Q4JQI0"/>
<dbReference type="FunCoup" id="Q4JQI0">
    <property type="interactions" value="36"/>
</dbReference>
<dbReference type="STRING" id="99883.ENSTNIP00000000394"/>
<dbReference type="Ensembl" id="ENSTNIT00000001678.1">
    <property type="protein sequence ID" value="ENSTNIP00000000394.1"/>
    <property type="gene ID" value="ENSTNIG00000000069.1"/>
</dbReference>
<dbReference type="GeneTree" id="ENSGT00390000011605"/>
<dbReference type="HOGENOM" id="CLU_119549_3_1_1"/>
<dbReference type="InParanoid" id="Q4JQI0"/>
<dbReference type="OMA" id="GPRRYNR"/>
<dbReference type="TreeFam" id="TF343336"/>
<dbReference type="Proteomes" id="UP000007303">
    <property type="component" value="Mitochondrion"/>
</dbReference>
<dbReference type="GO" id="GO:0031966">
    <property type="term" value="C:mitochondrial membrane"/>
    <property type="evidence" value="ECO:0007669"/>
    <property type="project" value="UniProtKB-SubCell"/>
</dbReference>
<dbReference type="GO" id="GO:0030964">
    <property type="term" value="C:NADH dehydrogenase complex"/>
    <property type="evidence" value="ECO:0007669"/>
    <property type="project" value="TreeGrafter"/>
</dbReference>
<dbReference type="GO" id="GO:0008137">
    <property type="term" value="F:NADH dehydrogenase (ubiquinone) activity"/>
    <property type="evidence" value="ECO:0007669"/>
    <property type="project" value="UniProtKB-EC"/>
</dbReference>
<dbReference type="FunFam" id="1.20.58.1610:FF:000004">
    <property type="entry name" value="NADH-quinone oxidoreductase subunit A"/>
    <property type="match status" value="1"/>
</dbReference>
<dbReference type="Gene3D" id="1.20.58.1610">
    <property type="entry name" value="NADH:ubiquinone/plastoquinone oxidoreductase, chain 3"/>
    <property type="match status" value="1"/>
</dbReference>
<dbReference type="InterPro" id="IPR000440">
    <property type="entry name" value="NADH_UbQ/plastoQ_OxRdtase_su3"/>
</dbReference>
<dbReference type="InterPro" id="IPR038430">
    <property type="entry name" value="NDAH_ubi_oxred_su3_sf"/>
</dbReference>
<dbReference type="PANTHER" id="PTHR11058">
    <property type="entry name" value="NADH-UBIQUINONE OXIDOREDUCTASE CHAIN 3"/>
    <property type="match status" value="1"/>
</dbReference>
<dbReference type="PANTHER" id="PTHR11058:SF9">
    <property type="entry name" value="NADH-UBIQUINONE OXIDOREDUCTASE CHAIN 3"/>
    <property type="match status" value="1"/>
</dbReference>
<dbReference type="Pfam" id="PF00507">
    <property type="entry name" value="Oxidored_q4"/>
    <property type="match status" value="1"/>
</dbReference>
<protein>
    <recommendedName>
        <fullName>NADH-ubiquinone oxidoreductase chain 3</fullName>
        <ecNumber>7.1.1.2</ecNumber>
    </recommendedName>
    <alternativeName>
        <fullName>NADH dehydrogenase subunit 3</fullName>
    </alternativeName>
</protein>
<feature type="chain" id="PRO_0000117838" description="NADH-ubiquinone oxidoreductase chain 3">
    <location>
        <begin position="1"/>
        <end position="117"/>
    </location>
</feature>
<feature type="transmembrane region" description="Helical" evidence="2">
    <location>
        <begin position="3"/>
        <end position="23"/>
    </location>
</feature>
<feature type="transmembrane region" description="Helical" evidence="2">
    <location>
        <begin position="56"/>
        <end position="76"/>
    </location>
</feature>
<feature type="transmembrane region" description="Helical" evidence="2">
    <location>
        <begin position="85"/>
        <end position="105"/>
    </location>
</feature>
<evidence type="ECO:0000250" key="1"/>
<evidence type="ECO:0000255" key="2"/>
<evidence type="ECO:0000305" key="3"/>
<organism>
    <name type="scientific">Tetraodon nigroviridis</name>
    <name type="common">Spotted green pufferfish</name>
    <name type="synonym">Chelonodon nigroviridis</name>
    <dbReference type="NCBI Taxonomy" id="99883"/>
    <lineage>
        <taxon>Eukaryota</taxon>
        <taxon>Metazoa</taxon>
        <taxon>Chordata</taxon>
        <taxon>Craniata</taxon>
        <taxon>Vertebrata</taxon>
        <taxon>Euteleostomi</taxon>
        <taxon>Actinopterygii</taxon>
        <taxon>Neopterygii</taxon>
        <taxon>Teleostei</taxon>
        <taxon>Neoteleostei</taxon>
        <taxon>Acanthomorphata</taxon>
        <taxon>Eupercaria</taxon>
        <taxon>Tetraodontiformes</taxon>
        <taxon>Tetradontoidea</taxon>
        <taxon>Tetraodontidae</taxon>
        <taxon>Tetraodon</taxon>
    </lineage>
</organism>